<name>UVRB_STRP7</name>
<comment type="function">
    <text evidence="1">The UvrABC repair system catalyzes the recognition and processing of DNA lesions. A damage recognition complex composed of 2 UvrA and 2 UvrB subunits scans DNA for abnormalities. Upon binding of the UvrA(2)B(2) complex to a putative damaged site, the DNA wraps around one UvrB monomer. DNA wrap is dependent on ATP binding by UvrB and probably causes local melting of the DNA helix, facilitating insertion of UvrB beta-hairpin between the DNA strands. Then UvrB probes one DNA strand for the presence of a lesion. If a lesion is found the UvrA subunits dissociate and the UvrB-DNA preincision complex is formed. This complex is subsequently bound by UvrC and the second UvrB is released. If no lesion is found, the DNA wraps around the other UvrB subunit that will check the other stand for damage.</text>
</comment>
<comment type="subunit">
    <text evidence="1">Forms a heterotetramer with UvrA during the search for lesions. Interacts with UvrC in an incision complex.</text>
</comment>
<comment type="subcellular location">
    <subcellularLocation>
        <location evidence="1">Cytoplasm</location>
    </subcellularLocation>
</comment>
<comment type="domain">
    <text evidence="1">The beta-hairpin motif is involved in DNA binding.</text>
</comment>
<comment type="similarity">
    <text evidence="1">Belongs to the UvrB family.</text>
</comment>
<proteinExistence type="inferred from homology"/>
<reference key="1">
    <citation type="journal article" date="2010" name="Genome Biol.">
        <title>Structure and dynamics of the pan-genome of Streptococcus pneumoniae and closely related species.</title>
        <authorList>
            <person name="Donati C."/>
            <person name="Hiller N.L."/>
            <person name="Tettelin H."/>
            <person name="Muzzi A."/>
            <person name="Croucher N.J."/>
            <person name="Angiuoli S.V."/>
            <person name="Oggioni M."/>
            <person name="Dunning Hotopp J.C."/>
            <person name="Hu F.Z."/>
            <person name="Riley D.R."/>
            <person name="Covacci A."/>
            <person name="Mitchell T.J."/>
            <person name="Bentley S.D."/>
            <person name="Kilian M."/>
            <person name="Ehrlich G.D."/>
            <person name="Rappuoli R."/>
            <person name="Moxon E.R."/>
            <person name="Masignani V."/>
        </authorList>
    </citation>
    <scope>NUCLEOTIDE SEQUENCE [LARGE SCALE GENOMIC DNA]</scope>
    <source>
        <strain>70585</strain>
    </source>
</reference>
<keyword id="KW-0067">ATP-binding</keyword>
<keyword id="KW-0963">Cytoplasm</keyword>
<keyword id="KW-0227">DNA damage</keyword>
<keyword id="KW-0228">DNA excision</keyword>
<keyword id="KW-0234">DNA repair</keyword>
<keyword id="KW-0267">Excision nuclease</keyword>
<keyword id="KW-0347">Helicase</keyword>
<keyword id="KW-0378">Hydrolase</keyword>
<keyword id="KW-0547">Nucleotide-binding</keyword>
<keyword id="KW-0742">SOS response</keyword>
<accession>C1C7L7</accession>
<gene>
    <name evidence="1" type="primary">uvrB</name>
    <name type="ordered locus">SP70585_1301</name>
</gene>
<dbReference type="EMBL" id="CP000918">
    <property type="protein sequence ID" value="ACO15829.1"/>
    <property type="molecule type" value="Genomic_DNA"/>
</dbReference>
<dbReference type="RefSeq" id="WP_000607035.1">
    <property type="nucleotide sequence ID" value="NC_012468.1"/>
</dbReference>
<dbReference type="SMR" id="C1C7L7"/>
<dbReference type="KEGG" id="snm:SP70585_1301"/>
<dbReference type="HOGENOM" id="CLU_009621_2_1_9"/>
<dbReference type="Proteomes" id="UP000002211">
    <property type="component" value="Chromosome"/>
</dbReference>
<dbReference type="GO" id="GO:0005737">
    <property type="term" value="C:cytoplasm"/>
    <property type="evidence" value="ECO:0007669"/>
    <property type="project" value="UniProtKB-SubCell"/>
</dbReference>
<dbReference type="GO" id="GO:0009380">
    <property type="term" value="C:excinuclease repair complex"/>
    <property type="evidence" value="ECO:0007669"/>
    <property type="project" value="InterPro"/>
</dbReference>
<dbReference type="GO" id="GO:0005524">
    <property type="term" value="F:ATP binding"/>
    <property type="evidence" value="ECO:0007669"/>
    <property type="project" value="UniProtKB-UniRule"/>
</dbReference>
<dbReference type="GO" id="GO:0016887">
    <property type="term" value="F:ATP hydrolysis activity"/>
    <property type="evidence" value="ECO:0007669"/>
    <property type="project" value="InterPro"/>
</dbReference>
<dbReference type="GO" id="GO:0003677">
    <property type="term" value="F:DNA binding"/>
    <property type="evidence" value="ECO:0007669"/>
    <property type="project" value="UniProtKB-UniRule"/>
</dbReference>
<dbReference type="GO" id="GO:0009381">
    <property type="term" value="F:excinuclease ABC activity"/>
    <property type="evidence" value="ECO:0007669"/>
    <property type="project" value="UniProtKB-UniRule"/>
</dbReference>
<dbReference type="GO" id="GO:0004386">
    <property type="term" value="F:helicase activity"/>
    <property type="evidence" value="ECO:0007669"/>
    <property type="project" value="UniProtKB-KW"/>
</dbReference>
<dbReference type="GO" id="GO:0006289">
    <property type="term" value="P:nucleotide-excision repair"/>
    <property type="evidence" value="ECO:0007669"/>
    <property type="project" value="UniProtKB-UniRule"/>
</dbReference>
<dbReference type="GO" id="GO:0009432">
    <property type="term" value="P:SOS response"/>
    <property type="evidence" value="ECO:0007669"/>
    <property type="project" value="UniProtKB-UniRule"/>
</dbReference>
<dbReference type="CDD" id="cd17916">
    <property type="entry name" value="DEXHc_UvrB"/>
    <property type="match status" value="1"/>
</dbReference>
<dbReference type="CDD" id="cd18790">
    <property type="entry name" value="SF2_C_UvrB"/>
    <property type="match status" value="1"/>
</dbReference>
<dbReference type="Gene3D" id="3.40.50.300">
    <property type="entry name" value="P-loop containing nucleotide triphosphate hydrolases"/>
    <property type="match status" value="3"/>
</dbReference>
<dbReference type="Gene3D" id="4.10.860.10">
    <property type="entry name" value="UVR domain"/>
    <property type="match status" value="1"/>
</dbReference>
<dbReference type="HAMAP" id="MF_00204">
    <property type="entry name" value="UvrB"/>
    <property type="match status" value="1"/>
</dbReference>
<dbReference type="InterPro" id="IPR006935">
    <property type="entry name" value="Helicase/UvrB_N"/>
</dbReference>
<dbReference type="InterPro" id="IPR014001">
    <property type="entry name" value="Helicase_ATP-bd"/>
</dbReference>
<dbReference type="InterPro" id="IPR001650">
    <property type="entry name" value="Helicase_C-like"/>
</dbReference>
<dbReference type="InterPro" id="IPR027417">
    <property type="entry name" value="P-loop_NTPase"/>
</dbReference>
<dbReference type="InterPro" id="IPR001943">
    <property type="entry name" value="UVR_dom"/>
</dbReference>
<dbReference type="InterPro" id="IPR036876">
    <property type="entry name" value="UVR_dom_sf"/>
</dbReference>
<dbReference type="InterPro" id="IPR004807">
    <property type="entry name" value="UvrB"/>
</dbReference>
<dbReference type="InterPro" id="IPR041471">
    <property type="entry name" value="UvrB_inter"/>
</dbReference>
<dbReference type="InterPro" id="IPR024759">
    <property type="entry name" value="UvrB_YAD/RRR_dom"/>
</dbReference>
<dbReference type="NCBIfam" id="NF003673">
    <property type="entry name" value="PRK05298.1"/>
    <property type="match status" value="1"/>
</dbReference>
<dbReference type="NCBIfam" id="TIGR00631">
    <property type="entry name" value="uvrb"/>
    <property type="match status" value="1"/>
</dbReference>
<dbReference type="PANTHER" id="PTHR24029">
    <property type="entry name" value="UVRABC SYSTEM PROTEIN B"/>
    <property type="match status" value="1"/>
</dbReference>
<dbReference type="PANTHER" id="PTHR24029:SF0">
    <property type="entry name" value="UVRABC SYSTEM PROTEIN B"/>
    <property type="match status" value="1"/>
</dbReference>
<dbReference type="Pfam" id="PF00271">
    <property type="entry name" value="Helicase_C"/>
    <property type="match status" value="1"/>
</dbReference>
<dbReference type="Pfam" id="PF04851">
    <property type="entry name" value="ResIII"/>
    <property type="match status" value="1"/>
</dbReference>
<dbReference type="Pfam" id="PF02151">
    <property type="entry name" value="UVR"/>
    <property type="match status" value="1"/>
</dbReference>
<dbReference type="Pfam" id="PF12344">
    <property type="entry name" value="UvrB"/>
    <property type="match status" value="1"/>
</dbReference>
<dbReference type="Pfam" id="PF17757">
    <property type="entry name" value="UvrB_inter"/>
    <property type="match status" value="1"/>
</dbReference>
<dbReference type="SMART" id="SM00487">
    <property type="entry name" value="DEXDc"/>
    <property type="match status" value="1"/>
</dbReference>
<dbReference type="SMART" id="SM00490">
    <property type="entry name" value="HELICc"/>
    <property type="match status" value="1"/>
</dbReference>
<dbReference type="SUPFAM" id="SSF46600">
    <property type="entry name" value="C-terminal UvrC-binding domain of UvrB"/>
    <property type="match status" value="1"/>
</dbReference>
<dbReference type="SUPFAM" id="SSF52540">
    <property type="entry name" value="P-loop containing nucleoside triphosphate hydrolases"/>
    <property type="match status" value="2"/>
</dbReference>
<dbReference type="PROSITE" id="PS51192">
    <property type="entry name" value="HELICASE_ATP_BIND_1"/>
    <property type="match status" value="1"/>
</dbReference>
<dbReference type="PROSITE" id="PS51194">
    <property type="entry name" value="HELICASE_CTER"/>
    <property type="match status" value="1"/>
</dbReference>
<dbReference type="PROSITE" id="PS50151">
    <property type="entry name" value="UVR"/>
    <property type="match status" value="1"/>
</dbReference>
<protein>
    <recommendedName>
        <fullName evidence="1">UvrABC system protein B</fullName>
        <shortName evidence="1">Protein UvrB</shortName>
    </recommendedName>
    <alternativeName>
        <fullName evidence="1">Excinuclease ABC subunit B</fullName>
    </alternativeName>
</protein>
<sequence length="662" mass="75738">MINHITDNQFKLVSKYQPSGDQPQAIEQLVDNIEGGEKAQILMGATGTGKTYTMSQVISKVNKPTLVIAHNKTLAGQLYGEFKEFFPENAVEYFVSYYDYYQPEAYVPSSDTYIEKDSSVNDEIDKLRHSATSALLERNDVIVVASVSCIYGLGSPKEYADSVVSLRPGLEISRDKLLNDLVDIQFERNDIDFQRGRFRVRGDVVEIFPASRDEHAFRVEFFGDEIDRIREVEALTGQVLGEVDHLAIFPATHFVTNDDHMEVAVAKIQAELEEQLAVFEKEGKLLEAQRLKQRTEYDIEMLREMGYTNGVENYSRHMDGRSEGEPPYTLLDFFPDDFLIMIDESHMTMGQIKGMYNGDRSRKEMLVNYGFRLPSALDNRPLRREEFESHVHQIVYVSATPGDYENEQTETVIEQIIRPTGLLDPEVEVRPTMGQIDDLLGEINARVEKNERTFITTLTKKMAEDLTDYFKEMGIKVKYMHSDIKTLERTEIIRDLRLGVFDVLVGINLLREGIDVPEVSLVAILDADKEGFLRNERGLIQTIGRAARNSEGHVIMYADTVTQSMQRAIDETARRRKIQMAYNEEHGIVPQTIKKEIRDLIAVTKAVAKEEDKEVDINSLNKQERKELVKKLEKQMQEAVEVLDFELAAQIRDMMLEVKALD</sequence>
<organism>
    <name type="scientific">Streptococcus pneumoniae (strain 70585)</name>
    <dbReference type="NCBI Taxonomy" id="488221"/>
    <lineage>
        <taxon>Bacteria</taxon>
        <taxon>Bacillati</taxon>
        <taxon>Bacillota</taxon>
        <taxon>Bacilli</taxon>
        <taxon>Lactobacillales</taxon>
        <taxon>Streptococcaceae</taxon>
        <taxon>Streptococcus</taxon>
    </lineage>
</organism>
<evidence type="ECO:0000255" key="1">
    <source>
        <dbReference type="HAMAP-Rule" id="MF_00204"/>
    </source>
</evidence>
<feature type="chain" id="PRO_1000200553" description="UvrABC system protein B">
    <location>
        <begin position="1"/>
        <end position="662"/>
    </location>
</feature>
<feature type="domain" description="Helicase ATP-binding" evidence="1">
    <location>
        <begin position="31"/>
        <end position="188"/>
    </location>
</feature>
<feature type="domain" description="Helicase C-terminal" evidence="1">
    <location>
        <begin position="435"/>
        <end position="601"/>
    </location>
</feature>
<feature type="domain" description="UVR" evidence="1">
    <location>
        <begin position="626"/>
        <end position="661"/>
    </location>
</feature>
<feature type="short sequence motif" description="Beta-hairpin">
    <location>
        <begin position="97"/>
        <end position="120"/>
    </location>
</feature>
<feature type="binding site" evidence="1">
    <location>
        <begin position="44"/>
        <end position="51"/>
    </location>
    <ligand>
        <name>ATP</name>
        <dbReference type="ChEBI" id="CHEBI:30616"/>
    </ligand>
</feature>